<sequence>MYRFTDFDVSNISIYLNHVLFYTTQQAGDLEHMETRNYSAMTEFFLVGLSQYPELQLFLFLLCLIMYMIILLGNSLLIIITILDSRLHTPMYFFLGNLSFLDICYTSSSIPPMLIIFMSERKSISFIGCALQMVVSLGLGSTECVLLAVMAYDHYVAICNPLRYSIIMNGVLYVQMAAWSWIIGCLTSLLQTVLTMMLPFCGNNVIDHITCEILALLKLVCSDITINVLIMTVTNIVSLVILLLLIFISYVFILSSILRINCAEGRKKAFSTCSAHSIVVILFYGSALFMYMKPKSKNTNTSDEIIGLSYGVVSPMLNPIIYSLRNKEVKEAVKKVLSRHLHLLKM</sequence>
<dbReference type="EMBL" id="AB065671">
    <property type="protein sequence ID" value="BAC05896.1"/>
    <property type="molecule type" value="Genomic_DNA"/>
</dbReference>
<dbReference type="EMBL" id="AL359846">
    <property type="status" value="NOT_ANNOTATED_CDS"/>
    <property type="molecule type" value="Genomic_DNA"/>
</dbReference>
<dbReference type="EMBL" id="BC140916">
    <property type="protein sequence ID" value="AAI40917.1"/>
    <property type="molecule type" value="mRNA"/>
</dbReference>
<dbReference type="EMBL" id="BK004251">
    <property type="protein sequence ID" value="DAA04649.1"/>
    <property type="molecule type" value="Genomic_DNA"/>
</dbReference>
<dbReference type="RefSeq" id="NP_001004484.1">
    <property type="nucleotide sequence ID" value="NM_001004484.1"/>
</dbReference>
<dbReference type="SMR" id="Q8NGV5"/>
<dbReference type="BioGRID" id="130361">
    <property type="interactions" value="1"/>
</dbReference>
<dbReference type="FunCoup" id="Q8NGV5">
    <property type="interactions" value="458"/>
</dbReference>
<dbReference type="STRING" id="9606.ENSP00000317357"/>
<dbReference type="GlyCosmos" id="Q8NGV5">
    <property type="glycosylation" value="2 sites, No reported glycans"/>
</dbReference>
<dbReference type="GlyGen" id="Q8NGV5">
    <property type="glycosylation" value="2 sites"/>
</dbReference>
<dbReference type="PhosphoSitePlus" id="Q8NGV5"/>
<dbReference type="BioMuta" id="OR13D1"/>
<dbReference type="DMDM" id="229462944"/>
<dbReference type="jPOST" id="Q8NGV5"/>
<dbReference type="MassIVE" id="Q8NGV5"/>
<dbReference type="PaxDb" id="9606-ENSP00000317357"/>
<dbReference type="Antibodypedia" id="29246">
    <property type="antibodies" value="91 antibodies from 22 providers"/>
</dbReference>
<dbReference type="DNASU" id="286365"/>
<dbReference type="GeneID" id="286365"/>
<dbReference type="KEGG" id="hsa:286365"/>
<dbReference type="UCSC" id="uc011lvs.2">
    <property type="organism name" value="human"/>
</dbReference>
<dbReference type="AGR" id="HGNC:14695"/>
<dbReference type="CTD" id="286365"/>
<dbReference type="GeneCards" id="OR13D1"/>
<dbReference type="HGNC" id="HGNC:14695">
    <property type="gene designation" value="OR13D1"/>
</dbReference>
<dbReference type="neXtProt" id="NX_Q8NGV5"/>
<dbReference type="PharmGKB" id="PA32040"/>
<dbReference type="VEuPathDB" id="HostDB:ENSG00000179055"/>
<dbReference type="eggNOG" id="ENOG502SHWR">
    <property type="taxonomic scope" value="Eukaryota"/>
</dbReference>
<dbReference type="HOGENOM" id="CLU_012526_1_0_1"/>
<dbReference type="InParanoid" id="Q8NGV5"/>
<dbReference type="OrthoDB" id="6144223at2759"/>
<dbReference type="PAN-GO" id="Q8NGV5">
    <property type="GO annotations" value="0 GO annotations based on evolutionary models"/>
</dbReference>
<dbReference type="PhylomeDB" id="Q8NGV5"/>
<dbReference type="TreeFam" id="TF352686"/>
<dbReference type="PathwayCommons" id="Q8NGV5"/>
<dbReference type="Reactome" id="R-HSA-9752946">
    <property type="pathway name" value="Expression and translocation of olfactory receptors"/>
</dbReference>
<dbReference type="BioGRID-ORCS" id="286365">
    <property type="hits" value="9 hits in 739 CRISPR screens"/>
</dbReference>
<dbReference type="GeneWiki" id="OR13D1"/>
<dbReference type="GenomeRNAi" id="286365"/>
<dbReference type="Pharos" id="Q8NGV5">
    <property type="development level" value="Tdark"/>
</dbReference>
<dbReference type="PRO" id="PR:Q8NGV5"/>
<dbReference type="Proteomes" id="UP000005640">
    <property type="component" value="Chromosome 9"/>
</dbReference>
<dbReference type="RNAct" id="Q8NGV5">
    <property type="molecule type" value="protein"/>
</dbReference>
<dbReference type="GO" id="GO:0005886">
    <property type="term" value="C:plasma membrane"/>
    <property type="evidence" value="ECO:0000318"/>
    <property type="project" value="GO_Central"/>
</dbReference>
<dbReference type="GO" id="GO:0004930">
    <property type="term" value="F:G protein-coupled receptor activity"/>
    <property type="evidence" value="ECO:0007669"/>
    <property type="project" value="UniProtKB-KW"/>
</dbReference>
<dbReference type="GO" id="GO:0004984">
    <property type="term" value="F:olfactory receptor activity"/>
    <property type="evidence" value="ECO:0000318"/>
    <property type="project" value="GO_Central"/>
</dbReference>
<dbReference type="GO" id="GO:0050911">
    <property type="term" value="P:detection of chemical stimulus involved in sensory perception of smell"/>
    <property type="evidence" value="ECO:0000318"/>
    <property type="project" value="GO_Central"/>
</dbReference>
<dbReference type="CDD" id="cd15430">
    <property type="entry name" value="7tmA_OR13-like"/>
    <property type="match status" value="1"/>
</dbReference>
<dbReference type="FunFam" id="1.10.1220.70:FF:000001">
    <property type="entry name" value="Olfactory receptor"/>
    <property type="match status" value="1"/>
</dbReference>
<dbReference type="FunFam" id="1.20.1070.10:FF:000501">
    <property type="entry name" value="Olfactory receptor"/>
    <property type="match status" value="1"/>
</dbReference>
<dbReference type="Gene3D" id="1.20.1070.10">
    <property type="entry name" value="Rhodopsin 7-helix transmembrane proteins"/>
    <property type="match status" value="1"/>
</dbReference>
<dbReference type="InterPro" id="IPR000276">
    <property type="entry name" value="GPCR_Rhodpsn"/>
</dbReference>
<dbReference type="InterPro" id="IPR017452">
    <property type="entry name" value="GPCR_Rhodpsn_7TM"/>
</dbReference>
<dbReference type="InterPro" id="IPR000725">
    <property type="entry name" value="Olfact_rcpt"/>
</dbReference>
<dbReference type="PANTHER" id="PTHR26453">
    <property type="entry name" value="OLFACTORY RECEPTOR"/>
    <property type="match status" value="1"/>
</dbReference>
<dbReference type="Pfam" id="PF13853">
    <property type="entry name" value="7tm_4"/>
    <property type="match status" value="1"/>
</dbReference>
<dbReference type="PRINTS" id="PR00237">
    <property type="entry name" value="GPCRRHODOPSN"/>
</dbReference>
<dbReference type="PRINTS" id="PR00245">
    <property type="entry name" value="OLFACTORYR"/>
</dbReference>
<dbReference type="SUPFAM" id="SSF81321">
    <property type="entry name" value="Family A G protein-coupled receptor-like"/>
    <property type="match status" value="1"/>
</dbReference>
<dbReference type="PROSITE" id="PS50262">
    <property type="entry name" value="G_PROTEIN_RECEP_F1_2"/>
    <property type="match status" value="1"/>
</dbReference>
<accession>Q8NGV5</accession>
<accession>B9EIS1</accession>
<accession>Q6IFL1</accession>
<evidence type="ECO:0000255" key="1"/>
<evidence type="ECO:0000255" key="2">
    <source>
        <dbReference type="PROSITE-ProRule" id="PRU00521"/>
    </source>
</evidence>
<evidence type="ECO:0000269" key="3">
    <source>
    </source>
</evidence>
<evidence type="ECO:0000305" key="4"/>
<protein>
    <recommendedName>
        <fullName>Olfactory receptor 13D1</fullName>
    </recommendedName>
    <alternativeName>
        <fullName>Olfactory receptor OR9-15</fullName>
    </alternativeName>
</protein>
<name>O13D1_HUMAN</name>
<feature type="chain" id="PRO_0000150737" description="Olfactory receptor 13D1">
    <location>
        <begin position="1"/>
        <end position="346"/>
    </location>
</feature>
<feature type="topological domain" description="Extracellular" evidence="1">
    <location>
        <begin position="1"/>
        <end position="57"/>
    </location>
</feature>
<feature type="transmembrane region" description="Helical; Name=1" evidence="1">
    <location>
        <begin position="58"/>
        <end position="78"/>
    </location>
</feature>
<feature type="topological domain" description="Cytoplasmic" evidence="1">
    <location>
        <begin position="79"/>
        <end position="86"/>
    </location>
</feature>
<feature type="transmembrane region" description="Helical; Name=2" evidence="1">
    <location>
        <begin position="87"/>
        <end position="107"/>
    </location>
</feature>
<feature type="topological domain" description="Extracellular" evidence="1">
    <location>
        <begin position="108"/>
        <end position="131"/>
    </location>
</feature>
<feature type="transmembrane region" description="Helical; Name=3" evidence="1">
    <location>
        <begin position="132"/>
        <end position="152"/>
    </location>
</feature>
<feature type="topological domain" description="Cytoplasmic" evidence="1">
    <location>
        <begin position="153"/>
        <end position="171"/>
    </location>
</feature>
<feature type="transmembrane region" description="Helical; Name=4" evidence="1">
    <location>
        <begin position="172"/>
        <end position="192"/>
    </location>
</feature>
<feature type="topological domain" description="Extracellular" evidence="1">
    <location>
        <begin position="193"/>
        <end position="229"/>
    </location>
</feature>
<feature type="transmembrane region" description="Helical; Name=5" evidence="1">
    <location>
        <begin position="230"/>
        <end position="249"/>
    </location>
</feature>
<feature type="topological domain" description="Cytoplasmic" evidence="1">
    <location>
        <begin position="250"/>
        <end position="269"/>
    </location>
</feature>
<feature type="transmembrane region" description="Helical; Name=6" evidence="1">
    <location>
        <begin position="270"/>
        <end position="290"/>
    </location>
</feature>
<feature type="topological domain" description="Extracellular" evidence="1">
    <location>
        <begin position="291"/>
        <end position="303"/>
    </location>
</feature>
<feature type="transmembrane region" description="Helical; Name=7" evidence="1">
    <location>
        <begin position="304"/>
        <end position="324"/>
    </location>
</feature>
<feature type="topological domain" description="Cytoplasmic" evidence="1">
    <location>
        <begin position="325"/>
        <end position="346"/>
    </location>
</feature>
<feature type="glycosylation site" description="N-linked (GlcNAc...) asparagine" evidence="1">
    <location>
        <position position="37"/>
    </location>
</feature>
<feature type="glycosylation site" description="N-linked (GlcNAc...) asparagine" evidence="1">
    <location>
        <position position="300"/>
    </location>
</feature>
<feature type="disulfide bond" evidence="2">
    <location>
        <begin position="129"/>
        <end position="221"/>
    </location>
</feature>
<feature type="sequence variant" id="VAR_055070" description="In dbSNP:rs10991359.">
    <original>F</original>
    <variation>L</variation>
    <location>
        <position position="21"/>
    </location>
</feature>
<feature type="sequence variant" id="VAR_055071" description="In dbSNP:rs13294411." evidence="3">
    <original>L</original>
    <variation>V</variation>
    <location>
        <position position="64"/>
    </location>
</feature>
<feature type="sequence variant" id="VAR_055072" description="In dbSNP:rs10820709." evidence="3">
    <original>Q</original>
    <variation>H</variation>
    <location>
        <position position="191"/>
    </location>
</feature>
<feature type="sequence variant" id="VAR_055073" description="In dbSNP:rs10761073." evidence="3">
    <original>S</original>
    <variation>L</variation>
    <location>
        <position position="277"/>
    </location>
</feature>
<keyword id="KW-1003">Cell membrane</keyword>
<keyword id="KW-1015">Disulfide bond</keyword>
<keyword id="KW-0297">G-protein coupled receptor</keyword>
<keyword id="KW-0325">Glycoprotein</keyword>
<keyword id="KW-0472">Membrane</keyword>
<keyword id="KW-0552">Olfaction</keyword>
<keyword id="KW-0675">Receptor</keyword>
<keyword id="KW-1185">Reference proteome</keyword>
<keyword id="KW-0716">Sensory transduction</keyword>
<keyword id="KW-0807">Transducer</keyword>
<keyword id="KW-0812">Transmembrane</keyword>
<keyword id="KW-1133">Transmembrane helix</keyword>
<organism>
    <name type="scientific">Homo sapiens</name>
    <name type="common">Human</name>
    <dbReference type="NCBI Taxonomy" id="9606"/>
    <lineage>
        <taxon>Eukaryota</taxon>
        <taxon>Metazoa</taxon>
        <taxon>Chordata</taxon>
        <taxon>Craniata</taxon>
        <taxon>Vertebrata</taxon>
        <taxon>Euteleostomi</taxon>
        <taxon>Mammalia</taxon>
        <taxon>Eutheria</taxon>
        <taxon>Euarchontoglires</taxon>
        <taxon>Primates</taxon>
        <taxon>Haplorrhini</taxon>
        <taxon>Catarrhini</taxon>
        <taxon>Hominidae</taxon>
        <taxon>Homo</taxon>
    </lineage>
</organism>
<comment type="function">
    <text evidence="4">Odorant receptor.</text>
</comment>
<comment type="subcellular location">
    <subcellularLocation>
        <location>Cell membrane</location>
        <topology>Multi-pass membrane protein</topology>
    </subcellularLocation>
</comment>
<comment type="similarity">
    <text evidence="2">Belongs to the G-protein coupled receptor 1 family.</text>
</comment>
<comment type="caution">
    <text evidence="4">It is uncertain whether Met-1 or Met-33 is the initiator.</text>
</comment>
<comment type="online information" name="Human Olfactory Receptor Data Exploratorium (HORDE)">
    <link uri="http://genome.weizmann.ac.il/horde/card/index/symbol:OR13D1"/>
</comment>
<proteinExistence type="evidence at transcript level"/>
<reference key="1">
    <citation type="submission" date="2001-07" db="EMBL/GenBank/DDBJ databases">
        <title>Genome-wide discovery and analysis of human seven transmembrane helix receptor genes.</title>
        <authorList>
            <person name="Suwa M."/>
            <person name="Sato T."/>
            <person name="Okouchi I."/>
            <person name="Arita M."/>
            <person name="Futami K."/>
            <person name="Matsumoto S."/>
            <person name="Tsutsumi S."/>
            <person name="Aburatani H."/>
            <person name="Asai K."/>
            <person name="Akiyama Y."/>
        </authorList>
    </citation>
    <scope>NUCLEOTIDE SEQUENCE [GENOMIC DNA]</scope>
</reference>
<reference key="2">
    <citation type="journal article" date="2004" name="Nature">
        <title>DNA sequence and analysis of human chromosome 9.</title>
        <authorList>
            <person name="Humphray S.J."/>
            <person name="Oliver K."/>
            <person name="Hunt A.R."/>
            <person name="Plumb R.W."/>
            <person name="Loveland J.E."/>
            <person name="Howe K.L."/>
            <person name="Andrews T.D."/>
            <person name="Searle S."/>
            <person name="Hunt S.E."/>
            <person name="Scott C.E."/>
            <person name="Jones M.C."/>
            <person name="Ainscough R."/>
            <person name="Almeida J.P."/>
            <person name="Ambrose K.D."/>
            <person name="Ashwell R.I.S."/>
            <person name="Babbage A.K."/>
            <person name="Babbage S."/>
            <person name="Bagguley C.L."/>
            <person name="Bailey J."/>
            <person name="Banerjee R."/>
            <person name="Barker D.J."/>
            <person name="Barlow K.F."/>
            <person name="Bates K."/>
            <person name="Beasley H."/>
            <person name="Beasley O."/>
            <person name="Bird C.P."/>
            <person name="Bray-Allen S."/>
            <person name="Brown A.J."/>
            <person name="Brown J.Y."/>
            <person name="Burford D."/>
            <person name="Burrill W."/>
            <person name="Burton J."/>
            <person name="Carder C."/>
            <person name="Carter N.P."/>
            <person name="Chapman J.C."/>
            <person name="Chen Y."/>
            <person name="Clarke G."/>
            <person name="Clark S.Y."/>
            <person name="Clee C.M."/>
            <person name="Clegg S."/>
            <person name="Collier R.E."/>
            <person name="Corby N."/>
            <person name="Crosier M."/>
            <person name="Cummings A.T."/>
            <person name="Davies J."/>
            <person name="Dhami P."/>
            <person name="Dunn M."/>
            <person name="Dutta I."/>
            <person name="Dyer L.W."/>
            <person name="Earthrowl M.E."/>
            <person name="Faulkner L."/>
            <person name="Fleming C.J."/>
            <person name="Frankish A."/>
            <person name="Frankland J.A."/>
            <person name="French L."/>
            <person name="Fricker D.G."/>
            <person name="Garner P."/>
            <person name="Garnett J."/>
            <person name="Ghori J."/>
            <person name="Gilbert J.G.R."/>
            <person name="Glison C."/>
            <person name="Grafham D.V."/>
            <person name="Gribble S."/>
            <person name="Griffiths C."/>
            <person name="Griffiths-Jones S."/>
            <person name="Grocock R."/>
            <person name="Guy J."/>
            <person name="Hall R.E."/>
            <person name="Hammond S."/>
            <person name="Harley J.L."/>
            <person name="Harrison E.S.I."/>
            <person name="Hart E.A."/>
            <person name="Heath P.D."/>
            <person name="Henderson C.D."/>
            <person name="Hopkins B.L."/>
            <person name="Howard P.J."/>
            <person name="Howden P.J."/>
            <person name="Huckle E."/>
            <person name="Johnson C."/>
            <person name="Johnson D."/>
            <person name="Joy A.A."/>
            <person name="Kay M."/>
            <person name="Keenan S."/>
            <person name="Kershaw J.K."/>
            <person name="Kimberley A.M."/>
            <person name="King A."/>
            <person name="Knights A."/>
            <person name="Laird G.K."/>
            <person name="Langford C."/>
            <person name="Lawlor S."/>
            <person name="Leongamornlert D.A."/>
            <person name="Leversha M."/>
            <person name="Lloyd C."/>
            <person name="Lloyd D.M."/>
            <person name="Lovell J."/>
            <person name="Martin S."/>
            <person name="Mashreghi-Mohammadi M."/>
            <person name="Matthews L."/>
            <person name="McLaren S."/>
            <person name="McLay K.E."/>
            <person name="McMurray A."/>
            <person name="Milne S."/>
            <person name="Nickerson T."/>
            <person name="Nisbett J."/>
            <person name="Nordsiek G."/>
            <person name="Pearce A.V."/>
            <person name="Peck A.I."/>
            <person name="Porter K.M."/>
            <person name="Pandian R."/>
            <person name="Pelan S."/>
            <person name="Phillimore B."/>
            <person name="Povey S."/>
            <person name="Ramsey Y."/>
            <person name="Rand V."/>
            <person name="Scharfe M."/>
            <person name="Sehra H.K."/>
            <person name="Shownkeen R."/>
            <person name="Sims S.K."/>
            <person name="Skuce C.D."/>
            <person name="Smith M."/>
            <person name="Steward C.A."/>
            <person name="Swarbreck D."/>
            <person name="Sycamore N."/>
            <person name="Tester J."/>
            <person name="Thorpe A."/>
            <person name="Tracey A."/>
            <person name="Tromans A."/>
            <person name="Thomas D.W."/>
            <person name="Wall M."/>
            <person name="Wallis J.M."/>
            <person name="West A.P."/>
            <person name="Whitehead S.L."/>
            <person name="Willey D.L."/>
            <person name="Williams S.A."/>
            <person name="Wilming L."/>
            <person name="Wray P.W."/>
            <person name="Young L."/>
            <person name="Ashurst J.L."/>
            <person name="Coulson A."/>
            <person name="Blocker H."/>
            <person name="Durbin R.M."/>
            <person name="Sulston J.E."/>
            <person name="Hubbard T."/>
            <person name="Jackson M.J."/>
            <person name="Bentley D.R."/>
            <person name="Beck S."/>
            <person name="Rogers J."/>
            <person name="Dunham I."/>
        </authorList>
    </citation>
    <scope>NUCLEOTIDE SEQUENCE [LARGE SCALE GENOMIC DNA]</scope>
</reference>
<reference key="3">
    <citation type="journal article" date="2004" name="Genome Res.">
        <title>The status, quality, and expansion of the NIH full-length cDNA project: the Mammalian Gene Collection (MGC).</title>
        <authorList>
            <consortium name="The MGC Project Team"/>
        </authorList>
    </citation>
    <scope>NUCLEOTIDE SEQUENCE [LARGE SCALE MRNA]</scope>
    <scope>VARIANTS VAL-64; HIS-191 AND LEU-277</scope>
</reference>
<reference key="4">
    <citation type="journal article" date="2004" name="Proc. Natl. Acad. Sci. U.S.A.">
        <title>The human olfactory receptor gene family.</title>
        <authorList>
            <person name="Malnic B."/>
            <person name="Godfrey P.A."/>
            <person name="Buck L.B."/>
        </authorList>
    </citation>
    <scope>IDENTIFICATION</scope>
</reference>
<reference key="5">
    <citation type="journal article" date="2004" name="Proc. Natl. Acad. Sci. U.S.A.">
        <authorList>
            <person name="Malnic B."/>
            <person name="Godfrey P.A."/>
            <person name="Buck L.B."/>
        </authorList>
    </citation>
    <scope>ERRATUM OF PUBMED:14983052</scope>
</reference>
<gene>
    <name type="primary">OR13D1</name>
</gene>